<reference key="1">
    <citation type="journal article" date="1998" name="Bioorg. Khim.">
        <title>Protein engineering of uridine phosphorylase from Escherichia coli K-12. I. Cloning and expression of uridine phosphorylase genes from Klebsiella aerogenes and Salmonella typhimurium in E. coli.</title>
        <authorList>
            <person name="Veiko V.P."/>
            <person name="Chebotaev D.V."/>
            <person name="Ovcharova I.V."/>
            <person name="Gul'Ko L.B."/>
        </authorList>
    </citation>
    <scope>NUCLEOTIDE SEQUENCE [GENOMIC DNA]</scope>
    <source>
        <strain>4140</strain>
    </source>
</reference>
<name>UDP_KLEAE</name>
<gene>
    <name type="primary">udp</name>
</gene>
<dbReference type="EC" id="2.4.2.3" evidence="1"/>
<dbReference type="EMBL" id="Y13414">
    <property type="protein sequence ID" value="CAA73838.1"/>
    <property type="molecule type" value="Genomic_DNA"/>
</dbReference>
<dbReference type="PIR" id="T46830">
    <property type="entry name" value="T46830"/>
</dbReference>
<dbReference type="SMR" id="O08444"/>
<dbReference type="STRING" id="548.EAG7_03989"/>
<dbReference type="UniPathway" id="UPA00574">
    <property type="reaction ID" value="UER00633"/>
</dbReference>
<dbReference type="GO" id="GO:0005829">
    <property type="term" value="C:cytosol"/>
    <property type="evidence" value="ECO:0007669"/>
    <property type="project" value="TreeGrafter"/>
</dbReference>
<dbReference type="GO" id="GO:0004850">
    <property type="term" value="F:uridine phosphorylase activity"/>
    <property type="evidence" value="ECO:0007669"/>
    <property type="project" value="UniProtKB-EC"/>
</dbReference>
<dbReference type="GO" id="GO:0009164">
    <property type="term" value="P:nucleoside catabolic process"/>
    <property type="evidence" value="ECO:0007669"/>
    <property type="project" value="UniProtKB-ARBA"/>
</dbReference>
<dbReference type="GO" id="GO:0009166">
    <property type="term" value="P:nucleotide catabolic process"/>
    <property type="evidence" value="ECO:0007669"/>
    <property type="project" value="InterPro"/>
</dbReference>
<dbReference type="GO" id="GO:0044206">
    <property type="term" value="P:UMP salvage"/>
    <property type="evidence" value="ECO:0007669"/>
    <property type="project" value="UniProtKB-UniPathway"/>
</dbReference>
<dbReference type="CDD" id="cd17767">
    <property type="entry name" value="UP_EcUdp-like"/>
    <property type="match status" value="1"/>
</dbReference>
<dbReference type="FunFam" id="3.40.50.1580:FF:000003">
    <property type="entry name" value="Uridine phosphorylase"/>
    <property type="match status" value="1"/>
</dbReference>
<dbReference type="Gene3D" id="3.40.50.1580">
    <property type="entry name" value="Nucleoside phosphorylase domain"/>
    <property type="match status" value="1"/>
</dbReference>
<dbReference type="InterPro" id="IPR018016">
    <property type="entry name" value="Nucleoside_phosphorylase_CS"/>
</dbReference>
<dbReference type="InterPro" id="IPR000845">
    <property type="entry name" value="Nucleoside_phosphorylase_d"/>
</dbReference>
<dbReference type="InterPro" id="IPR035994">
    <property type="entry name" value="Nucleoside_phosphorylase_sf"/>
</dbReference>
<dbReference type="InterPro" id="IPR010058">
    <property type="entry name" value="Uridine_phosphorylase"/>
</dbReference>
<dbReference type="NCBIfam" id="NF008383">
    <property type="entry name" value="PRK11178.1"/>
    <property type="match status" value="1"/>
</dbReference>
<dbReference type="NCBIfam" id="TIGR01718">
    <property type="entry name" value="Uridine-psphlse"/>
    <property type="match status" value="1"/>
</dbReference>
<dbReference type="PANTHER" id="PTHR43691:SF11">
    <property type="entry name" value="FI09636P-RELATED"/>
    <property type="match status" value="1"/>
</dbReference>
<dbReference type="PANTHER" id="PTHR43691">
    <property type="entry name" value="URIDINE PHOSPHORYLASE"/>
    <property type="match status" value="1"/>
</dbReference>
<dbReference type="Pfam" id="PF01048">
    <property type="entry name" value="PNP_UDP_1"/>
    <property type="match status" value="1"/>
</dbReference>
<dbReference type="SUPFAM" id="SSF53167">
    <property type="entry name" value="Purine and uridine phosphorylases"/>
    <property type="match status" value="1"/>
</dbReference>
<dbReference type="PROSITE" id="PS01232">
    <property type="entry name" value="PNP_UDP_1"/>
    <property type="match status" value="1"/>
</dbReference>
<comment type="function">
    <text evidence="1">Catalyzes the reversible phosphorylytic cleavage of uridine to uracil and ribose-1-phosphate.</text>
</comment>
<comment type="catalytic activity">
    <reaction evidence="1">
        <text>uridine + phosphate = alpha-D-ribose 1-phosphate + uracil</text>
        <dbReference type="Rhea" id="RHEA:24388"/>
        <dbReference type="ChEBI" id="CHEBI:16704"/>
        <dbReference type="ChEBI" id="CHEBI:17568"/>
        <dbReference type="ChEBI" id="CHEBI:43474"/>
        <dbReference type="ChEBI" id="CHEBI:57720"/>
        <dbReference type="EC" id="2.4.2.3"/>
    </reaction>
</comment>
<comment type="pathway">
    <text>Pyrimidine metabolism; UMP biosynthesis via salvage pathway; uracil from uridine (phosphorylase route): step 1/1.</text>
</comment>
<comment type="subunit">
    <text evidence="1">Homohexamer.</text>
</comment>
<comment type="subcellular location">
    <subcellularLocation>
        <location evidence="1">Cytoplasm</location>
    </subcellularLocation>
</comment>
<comment type="similarity">
    <text evidence="2">Belongs to the PNP/UDP phosphorylase family.</text>
</comment>
<keyword id="KW-0963">Cytoplasm</keyword>
<keyword id="KW-0328">Glycosyltransferase</keyword>
<keyword id="KW-0808">Transferase</keyword>
<feature type="chain" id="PRO_0000063187" description="Uridine phosphorylase">
    <location>
        <begin position="1"/>
        <end position="253"/>
    </location>
</feature>
<evidence type="ECO:0000250" key="1">
    <source>
        <dbReference type="UniProtKB" id="P12758"/>
    </source>
</evidence>
<evidence type="ECO:0000305" key="2"/>
<organism>
    <name type="scientific">Klebsiella aerogenes</name>
    <name type="common">Enterobacter aerogenes</name>
    <dbReference type="NCBI Taxonomy" id="548"/>
    <lineage>
        <taxon>Bacteria</taxon>
        <taxon>Pseudomonadati</taxon>
        <taxon>Pseudomonadota</taxon>
        <taxon>Gammaproteobacteria</taxon>
        <taxon>Enterobacterales</taxon>
        <taxon>Enterobacteriaceae</taxon>
        <taxon>Klebsiella/Raoultella group</taxon>
        <taxon>Klebsiella</taxon>
    </lineage>
</organism>
<accession>O08444</accession>
<protein>
    <recommendedName>
        <fullName evidence="1">Uridine phosphorylase</fullName>
        <shortName evidence="1">UPase</shortName>
        <shortName evidence="1">UrdPase</shortName>
        <ecNumber evidence="1">2.4.2.3</ecNumber>
    </recommendedName>
</protein>
<sequence length="253" mass="27034">MSKSDVFHLGLTKNDLQGATLAIVPGDPERVEKIAALMDKPVKLASHREFTSWRAELDGKPVIVCSTGIGGPSTSIAVEELAHVGVRTFLRIGTTGAIQPHINVGDVLVTTGSVRLDGASLHFAPMEFPAVADFACTTALVEAAKSIGATTHIGVTASSDTFYPGQERYDTFSGRVVSRFKGSMEEWQAMGVMNYEMESATLLTMCASQGLRAGMVAGVIVNRTQQEIPNAETMKQTESHAVKIVVEAARRLL</sequence>
<proteinExistence type="inferred from homology"/>